<gene>
    <name evidence="1" type="primary">rplE</name>
    <name type="ordered locus">CV_4174</name>
</gene>
<feature type="chain" id="PRO_0000124915" description="Large ribosomal subunit protein uL5">
    <location>
        <begin position="1"/>
        <end position="179"/>
    </location>
</feature>
<comment type="function">
    <text evidence="1">This is one of the proteins that bind and probably mediate the attachment of the 5S RNA into the large ribosomal subunit, where it forms part of the central protuberance. In the 70S ribosome it contacts protein S13 of the 30S subunit (bridge B1b), connecting the 2 subunits; this bridge is implicated in subunit movement. Contacts the P site tRNA; the 5S rRNA and some of its associated proteins might help stabilize positioning of ribosome-bound tRNAs.</text>
</comment>
<comment type="subunit">
    <text evidence="1">Part of the 50S ribosomal subunit; part of the 5S rRNA/L5/L18/L25 subcomplex. Contacts the 5S rRNA and the P site tRNA. Forms a bridge to the 30S subunit in the 70S ribosome.</text>
</comment>
<comment type="similarity">
    <text evidence="1">Belongs to the universal ribosomal protein uL5 family.</text>
</comment>
<dbReference type="EMBL" id="AE016825">
    <property type="protein sequence ID" value="AAQ61834.1"/>
    <property type="molecule type" value="Genomic_DNA"/>
</dbReference>
<dbReference type="RefSeq" id="WP_011137721.1">
    <property type="nucleotide sequence ID" value="NC_005085.1"/>
</dbReference>
<dbReference type="SMR" id="Q7NQG4"/>
<dbReference type="STRING" id="243365.CV_4174"/>
<dbReference type="GeneID" id="66366354"/>
<dbReference type="KEGG" id="cvi:CV_4174"/>
<dbReference type="eggNOG" id="COG0094">
    <property type="taxonomic scope" value="Bacteria"/>
</dbReference>
<dbReference type="HOGENOM" id="CLU_061015_2_1_4"/>
<dbReference type="OrthoDB" id="9806626at2"/>
<dbReference type="Proteomes" id="UP000001424">
    <property type="component" value="Chromosome"/>
</dbReference>
<dbReference type="GO" id="GO:1990904">
    <property type="term" value="C:ribonucleoprotein complex"/>
    <property type="evidence" value="ECO:0007669"/>
    <property type="project" value="UniProtKB-KW"/>
</dbReference>
<dbReference type="GO" id="GO:0005840">
    <property type="term" value="C:ribosome"/>
    <property type="evidence" value="ECO:0007669"/>
    <property type="project" value="UniProtKB-KW"/>
</dbReference>
<dbReference type="GO" id="GO:0019843">
    <property type="term" value="F:rRNA binding"/>
    <property type="evidence" value="ECO:0007669"/>
    <property type="project" value="UniProtKB-UniRule"/>
</dbReference>
<dbReference type="GO" id="GO:0003735">
    <property type="term" value="F:structural constituent of ribosome"/>
    <property type="evidence" value="ECO:0007669"/>
    <property type="project" value="InterPro"/>
</dbReference>
<dbReference type="GO" id="GO:0000049">
    <property type="term" value="F:tRNA binding"/>
    <property type="evidence" value="ECO:0007669"/>
    <property type="project" value="UniProtKB-UniRule"/>
</dbReference>
<dbReference type="GO" id="GO:0006412">
    <property type="term" value="P:translation"/>
    <property type="evidence" value="ECO:0007669"/>
    <property type="project" value="UniProtKB-UniRule"/>
</dbReference>
<dbReference type="FunFam" id="3.30.1440.10:FF:000001">
    <property type="entry name" value="50S ribosomal protein L5"/>
    <property type="match status" value="1"/>
</dbReference>
<dbReference type="Gene3D" id="3.30.1440.10">
    <property type="match status" value="1"/>
</dbReference>
<dbReference type="HAMAP" id="MF_01333_B">
    <property type="entry name" value="Ribosomal_uL5_B"/>
    <property type="match status" value="1"/>
</dbReference>
<dbReference type="InterPro" id="IPR002132">
    <property type="entry name" value="Ribosomal_uL5"/>
</dbReference>
<dbReference type="InterPro" id="IPR020930">
    <property type="entry name" value="Ribosomal_uL5_bac-type"/>
</dbReference>
<dbReference type="InterPro" id="IPR031309">
    <property type="entry name" value="Ribosomal_uL5_C"/>
</dbReference>
<dbReference type="InterPro" id="IPR020929">
    <property type="entry name" value="Ribosomal_uL5_CS"/>
</dbReference>
<dbReference type="InterPro" id="IPR022803">
    <property type="entry name" value="Ribosomal_uL5_dom_sf"/>
</dbReference>
<dbReference type="InterPro" id="IPR031310">
    <property type="entry name" value="Ribosomal_uL5_N"/>
</dbReference>
<dbReference type="NCBIfam" id="NF000585">
    <property type="entry name" value="PRK00010.1"/>
    <property type="match status" value="1"/>
</dbReference>
<dbReference type="PANTHER" id="PTHR11994">
    <property type="entry name" value="60S RIBOSOMAL PROTEIN L11-RELATED"/>
    <property type="match status" value="1"/>
</dbReference>
<dbReference type="Pfam" id="PF00281">
    <property type="entry name" value="Ribosomal_L5"/>
    <property type="match status" value="1"/>
</dbReference>
<dbReference type="Pfam" id="PF00673">
    <property type="entry name" value="Ribosomal_L5_C"/>
    <property type="match status" value="1"/>
</dbReference>
<dbReference type="PIRSF" id="PIRSF002161">
    <property type="entry name" value="Ribosomal_L5"/>
    <property type="match status" value="1"/>
</dbReference>
<dbReference type="SUPFAM" id="SSF55282">
    <property type="entry name" value="RL5-like"/>
    <property type="match status" value="1"/>
</dbReference>
<dbReference type="PROSITE" id="PS00358">
    <property type="entry name" value="RIBOSOMAL_L5"/>
    <property type="match status" value="1"/>
</dbReference>
<protein>
    <recommendedName>
        <fullName evidence="1">Large ribosomal subunit protein uL5</fullName>
    </recommendedName>
    <alternativeName>
        <fullName evidence="2">50S ribosomal protein L5</fullName>
    </alternativeName>
</protein>
<name>RL5_CHRVO</name>
<proteinExistence type="inferred from homology"/>
<sequence>MARLYDFYKDSVVPELMKQFGYKSIMQVPRIEKITVNMGVGEAVADKKVMEFAVGDLEKIAGQKPVVTTARKSIAGFKIRDDYPVGCKVTLRRERMYEFLDRLVTIALPRVRDFRGVSAKSFDGRGNYNMGVKEQIIFPEIEYDKIDALRGMNITITTSAKTDEEARALLAAFKFPFKG</sequence>
<evidence type="ECO:0000255" key="1">
    <source>
        <dbReference type="HAMAP-Rule" id="MF_01333"/>
    </source>
</evidence>
<evidence type="ECO:0000305" key="2"/>
<reference key="1">
    <citation type="journal article" date="2003" name="Proc. Natl. Acad. Sci. U.S.A.">
        <title>The complete genome sequence of Chromobacterium violaceum reveals remarkable and exploitable bacterial adaptability.</title>
        <authorList>
            <person name="Vasconcelos A.T.R."/>
            <person name="de Almeida D.F."/>
            <person name="Hungria M."/>
            <person name="Guimaraes C.T."/>
            <person name="Antonio R.V."/>
            <person name="Almeida F.C."/>
            <person name="de Almeida L.G.P."/>
            <person name="de Almeida R."/>
            <person name="Alves-Gomes J.A."/>
            <person name="Andrade E.M."/>
            <person name="Araripe J."/>
            <person name="de Araujo M.F.F."/>
            <person name="Astolfi-Filho S."/>
            <person name="Azevedo V."/>
            <person name="Baptista A.J."/>
            <person name="Bataus L.A.M."/>
            <person name="Batista J.S."/>
            <person name="Belo A."/>
            <person name="van den Berg C."/>
            <person name="Bogo M."/>
            <person name="Bonatto S."/>
            <person name="Bordignon J."/>
            <person name="Brigido M.M."/>
            <person name="Brito C.A."/>
            <person name="Brocchi M."/>
            <person name="Burity H.A."/>
            <person name="Camargo A.A."/>
            <person name="Cardoso D.D.P."/>
            <person name="Carneiro N.P."/>
            <person name="Carraro D.M."/>
            <person name="Carvalho C.M.B."/>
            <person name="Cascardo J.C.M."/>
            <person name="Cavada B.S."/>
            <person name="Chueire L.M.O."/>
            <person name="Creczynski-Pasa T.B."/>
            <person name="Cunha-Junior N.C."/>
            <person name="Fagundes N."/>
            <person name="Falcao C.L."/>
            <person name="Fantinatti F."/>
            <person name="Farias I.P."/>
            <person name="Felipe M.S.S."/>
            <person name="Ferrari L.P."/>
            <person name="Ferro J.A."/>
            <person name="Ferro M.I.T."/>
            <person name="Franco G.R."/>
            <person name="Freitas N.S.A."/>
            <person name="Furlan L.R."/>
            <person name="Gazzinelli R.T."/>
            <person name="Gomes E.A."/>
            <person name="Goncalves P.R."/>
            <person name="Grangeiro T.B."/>
            <person name="Grattapaglia D."/>
            <person name="Grisard E.C."/>
            <person name="Hanna E.S."/>
            <person name="Jardim S.N."/>
            <person name="Laurino J."/>
            <person name="Leoi L.C.T."/>
            <person name="Lima L.F.A."/>
            <person name="Loureiro M.F."/>
            <person name="Lyra M.C.C.P."/>
            <person name="Madeira H.M.F."/>
            <person name="Manfio G.P."/>
            <person name="Maranhao A.Q."/>
            <person name="Martins W.S."/>
            <person name="di Mauro S.M.Z."/>
            <person name="de Medeiros S.R.B."/>
            <person name="Meissner R.V."/>
            <person name="Moreira M.A.M."/>
            <person name="Nascimento F.F."/>
            <person name="Nicolas M.F."/>
            <person name="Oliveira J.G."/>
            <person name="Oliveira S.C."/>
            <person name="Paixao R.F.C."/>
            <person name="Parente J.A."/>
            <person name="Pedrosa F.O."/>
            <person name="Pena S.D.J."/>
            <person name="Pereira J.O."/>
            <person name="Pereira M."/>
            <person name="Pinto L.S.R.C."/>
            <person name="Pinto L.S."/>
            <person name="Porto J.I.R."/>
            <person name="Potrich D.P."/>
            <person name="Ramalho-Neto C.E."/>
            <person name="Reis A.M.M."/>
            <person name="Rigo L.U."/>
            <person name="Rondinelli E."/>
            <person name="Santos E.B.P."/>
            <person name="Santos F.R."/>
            <person name="Schneider M.P.C."/>
            <person name="Seuanez H.N."/>
            <person name="Silva A.M.R."/>
            <person name="da Silva A.L.C."/>
            <person name="Silva D.W."/>
            <person name="Silva R."/>
            <person name="Simoes I.C."/>
            <person name="Simon D."/>
            <person name="Soares C.M.A."/>
            <person name="Soares R.B.A."/>
            <person name="Souza E.M."/>
            <person name="Souza K.R.L."/>
            <person name="Souza R.C."/>
            <person name="Steffens M.B.R."/>
            <person name="Steindel M."/>
            <person name="Teixeira S.R."/>
            <person name="Urmenyi T."/>
            <person name="Vettore A."/>
            <person name="Wassem R."/>
            <person name="Zaha A."/>
            <person name="Simpson A.J.G."/>
        </authorList>
    </citation>
    <scope>NUCLEOTIDE SEQUENCE [LARGE SCALE GENOMIC DNA]</scope>
    <source>
        <strain>ATCC 12472 / DSM 30191 / JCM 1249 / CCUG 213 / NBRC 12614 / NCIMB 9131 / NCTC 9757 / MK</strain>
    </source>
</reference>
<keyword id="KW-1185">Reference proteome</keyword>
<keyword id="KW-0687">Ribonucleoprotein</keyword>
<keyword id="KW-0689">Ribosomal protein</keyword>
<keyword id="KW-0694">RNA-binding</keyword>
<keyword id="KW-0699">rRNA-binding</keyword>
<keyword id="KW-0820">tRNA-binding</keyword>
<organism>
    <name type="scientific">Chromobacterium violaceum (strain ATCC 12472 / DSM 30191 / JCM 1249 / CCUG 213 / NBRC 12614 / NCIMB 9131 / NCTC 9757 / MK)</name>
    <dbReference type="NCBI Taxonomy" id="243365"/>
    <lineage>
        <taxon>Bacteria</taxon>
        <taxon>Pseudomonadati</taxon>
        <taxon>Pseudomonadota</taxon>
        <taxon>Betaproteobacteria</taxon>
        <taxon>Neisseriales</taxon>
        <taxon>Chromobacteriaceae</taxon>
        <taxon>Chromobacterium</taxon>
    </lineage>
</organism>
<accession>Q7NQG4</accession>